<reference key="1">
    <citation type="journal article" date="2002" name="Proc. Natl. Acad. Sci. U.S.A.">
        <title>Extensive mosaic structure revealed by the complete genome sequence of uropathogenic Escherichia coli.</title>
        <authorList>
            <person name="Welch R.A."/>
            <person name="Burland V."/>
            <person name="Plunkett G. III"/>
            <person name="Redford P."/>
            <person name="Roesch P."/>
            <person name="Rasko D."/>
            <person name="Buckles E.L."/>
            <person name="Liou S.-R."/>
            <person name="Boutin A."/>
            <person name="Hackett J."/>
            <person name="Stroud D."/>
            <person name="Mayhew G.F."/>
            <person name="Rose D.J."/>
            <person name="Zhou S."/>
            <person name="Schwartz D.C."/>
            <person name="Perna N.T."/>
            <person name="Mobley H.L.T."/>
            <person name="Donnenberg M.S."/>
            <person name="Blattner F.R."/>
        </authorList>
    </citation>
    <scope>NUCLEOTIDE SEQUENCE [LARGE SCALE GENOMIC DNA]</scope>
    <source>
        <strain>CFT073 / ATCC 700928 / UPEC</strain>
    </source>
</reference>
<feature type="signal peptide" evidence="2">
    <location>
        <begin position="1"/>
        <end position="29"/>
    </location>
</feature>
<feature type="chain" id="PRO_0000429533" description="Probable outer membrane usher protein EcpC">
    <location>
        <begin position="30"/>
        <end position="841"/>
    </location>
</feature>
<accession>Q8CWC1</accession>
<dbReference type="EMBL" id="AE014075">
    <property type="protein sequence ID" value="AAN78883.1"/>
    <property type="molecule type" value="Genomic_DNA"/>
</dbReference>
<dbReference type="RefSeq" id="WP_001131117.1">
    <property type="nucleotide sequence ID" value="NZ_CP051263.1"/>
</dbReference>
<dbReference type="STRING" id="199310.c0402"/>
<dbReference type="KEGG" id="ecc:c0402"/>
<dbReference type="eggNOG" id="COG3188">
    <property type="taxonomic scope" value="Bacteria"/>
</dbReference>
<dbReference type="HOGENOM" id="CLU_017537_0_0_6"/>
<dbReference type="BioCyc" id="ECOL199310:C0402-MONOMER"/>
<dbReference type="Proteomes" id="UP000001410">
    <property type="component" value="Chromosome"/>
</dbReference>
<dbReference type="InterPro" id="IPR008969">
    <property type="entry name" value="CarboxyPept-like_regulatory"/>
</dbReference>
<dbReference type="InterPro" id="IPR031917">
    <property type="entry name" value="Pilus_assem_C"/>
</dbReference>
<dbReference type="InterPro" id="IPR032636">
    <property type="entry name" value="Pilus_assem_E-set-like_dom"/>
</dbReference>
<dbReference type="Pfam" id="PF15976">
    <property type="entry name" value="CooC_C"/>
    <property type="match status" value="1"/>
</dbReference>
<dbReference type="Pfam" id="PF16967">
    <property type="entry name" value="TcfC"/>
    <property type="match status" value="1"/>
</dbReference>
<dbReference type="SUPFAM" id="SSF49464">
    <property type="entry name" value="Carboxypeptidase regulatory domain-like"/>
    <property type="match status" value="1"/>
</dbReference>
<comment type="function">
    <text evidence="1">Part of the ecpRABCDE operon, which encodes the E.coli common pilus (ECP). ECP is found in both commensal and pathogenic strains and plays a dual role in early-stage biofilm development and host cell recognition (By similarity).</text>
</comment>
<comment type="induction">
    <text evidence="1">Negatively regulated by H-NS. Positively regulated by IHF and EcpR (By similarity).</text>
</comment>
<comment type="similarity">
    <text evidence="3">Belongs to the EcpC/MatD family.</text>
</comment>
<gene>
    <name type="primary">ecpC</name>
    <name type="synonym">yagX</name>
    <name type="ordered locus">c0402</name>
</gene>
<name>ECPC_ECOL6</name>
<evidence type="ECO:0000250" key="1"/>
<evidence type="ECO:0000255" key="2"/>
<evidence type="ECO:0000305" key="3"/>
<proteinExistence type="inferred from homology"/>
<sequence length="841" mass="91262">MPLRRFSPGLKAQFAFGMVFLFVQPDASAADISAQQIGGVIIPQAFSQALQDGMSVPLYIHLAGSQGRQDDQRIGSAFIWLDDGQLRIRKIQLEESEDNASVSEQTRQQLTTLANAPFNEALTIPLTDNAQLDLSLRQLLLQLVVKREALGTVLRSRSEDIGQSSVNTLSSNLSYNFGVYNNQLRNGGSNTSSYLSLNNVTALREHHVVLDGSLYGIGSGQQDSELYKAMYERDFAGHRFAGGMLDTWNLQSLGPMTAISAGKIYGLSWGNQASSTIFDSSQSATPVIAFLPAAGEVHLTRDGRLLSVQNFTMGNHEVDTRGLPYGIYDVEVEVIVNGRVISKRTQRVNKLFSRGRGVGAPLAWQIWGGSFHMDRWSENGKKTRPAKESWLAGASTSGSLSTFSWAATGYGYDNQAVGETRLTLPLGGAINVNLQNMLASDSSWSNIAGISATLPGGFSSLWVNQEKTRIGNQLRRSDADNRAIGGTLNLNSLWSKLGTFSISYNDDRRYNSHYYTADYYQSVYSGTFGSLGLRAGIQRYNNGDSSANTGKYIALDLSLPLGNWFSAGMTHQNGYTMANLSARKQFDEGTIRTVGANLSRAISGDTGDDKTLSGGAYAQFDARYASGTLNVNSAADGYINTNLTANGSVGWQGKNIAASGRTDGNAGVIFDTGLENDGQISAKINGRIFPLNGKRNYLPLSPYGRYEVELQNSKNSLDSYDIVSGRKSHLTLYPGNVAVIEPEVKQMVTVSGRIRAEDGTLLANARINNHIGRTRTDENGEFVMDVDKKYPTIDFRYSGNKTCEVALELNQARGAVWVGDVVCSGLSSWAAVTQTGEENES</sequence>
<protein>
    <recommendedName>
        <fullName>Probable outer membrane usher protein EcpC</fullName>
    </recommendedName>
</protein>
<organism>
    <name type="scientific">Escherichia coli O6:H1 (strain CFT073 / ATCC 700928 / UPEC)</name>
    <dbReference type="NCBI Taxonomy" id="199310"/>
    <lineage>
        <taxon>Bacteria</taxon>
        <taxon>Pseudomonadati</taxon>
        <taxon>Pseudomonadota</taxon>
        <taxon>Gammaproteobacteria</taxon>
        <taxon>Enterobacterales</taxon>
        <taxon>Enterobacteriaceae</taxon>
        <taxon>Escherichia</taxon>
    </lineage>
</organism>
<keyword id="KW-1029">Fimbrium biogenesis</keyword>
<keyword id="KW-1185">Reference proteome</keyword>
<keyword id="KW-0732">Signal</keyword>
<keyword id="KW-0813">Transport</keyword>